<accession>Q9QXK9</accession>
<accession>Q9JHP6</accession>
<keyword id="KW-0025">Alternative splicing</keyword>
<keyword id="KW-1003">Cell membrane</keyword>
<keyword id="KW-0963">Cytoplasm</keyword>
<keyword id="KW-0472">Membrane</keyword>
<keyword id="KW-0597">Phosphoprotein</keyword>
<keyword id="KW-1185">Reference proteome</keyword>
<keyword id="KW-0727">SH2 domain</keyword>
<keyword id="KW-0729">SH3-binding</keyword>
<sequence length="374" mass="40953">MEFCLAQPCPQGNHEATSSTFNTFQPMNLTQGRCQNLSCGSRPSMQVMKEQGVQLSPRTNHTVVSASAPGTAWVLGNADRAEEVPGKGDLSLQAETRAWVQKTQAHWLLLKTAPLWFHGFITRREAERLLQPQPLGCYLVRFSESAVTFVLSYRSQTCCRHFLLAQLGDGRHVVLGEDSAHAQLQDLLEHYTECPLSPYGEILTQPLARQTAEPAGLSLRADSDSGSKRQDPDTQLSLLLQQGQAQASGHTEKVWASQQKATSQASRPRPPIPAKPQLPPEVYTSPASRLHQAPPINPIYQEPDEPIAFYAMGRGSPGDAPSNIYAEVEGPSGTAPIGHPILRKCWSRPISRGQVREVQGKISSRSRAERGSPS</sequence>
<name>SH22A_MOUSE</name>
<feature type="chain" id="PRO_0000097727" description="SH2 domain-containing protein 2A">
    <location>
        <begin position="1"/>
        <end position="374"/>
    </location>
</feature>
<feature type="domain" description="SH2" evidence="4">
    <location>
        <begin position="116"/>
        <end position="207"/>
    </location>
</feature>
<feature type="region of interest" description="Disordered" evidence="5">
    <location>
        <begin position="213"/>
        <end position="232"/>
    </location>
</feature>
<feature type="region of interest" description="Disordered" evidence="5">
    <location>
        <begin position="241"/>
        <end position="301"/>
    </location>
</feature>
<feature type="region of interest" description="Disordered" evidence="5">
    <location>
        <begin position="321"/>
        <end position="340"/>
    </location>
</feature>
<feature type="region of interest" description="Disordered" evidence="5">
    <location>
        <begin position="353"/>
        <end position="374"/>
    </location>
</feature>
<feature type="short sequence motif" description="SH3-binding" evidence="3">
    <location>
        <begin position="267"/>
        <end position="273"/>
    </location>
</feature>
<feature type="compositionally biased region" description="Basic and acidic residues" evidence="5">
    <location>
        <begin position="221"/>
        <end position="232"/>
    </location>
</feature>
<feature type="compositionally biased region" description="Polar residues" evidence="5">
    <location>
        <begin position="256"/>
        <end position="266"/>
    </location>
</feature>
<feature type="compositionally biased region" description="Pro residues" evidence="5">
    <location>
        <begin position="268"/>
        <end position="279"/>
    </location>
</feature>
<feature type="modified residue" description="Phosphoserine" evidence="2">
    <location>
        <position position="237"/>
    </location>
</feature>
<feature type="modified residue" description="Phosphoserine" evidence="2">
    <location>
        <position position="316"/>
    </location>
</feature>
<feature type="splice variant" id="VSP_003967" description="In isoform 2." evidence="7 8">
    <location>
        <begin position="254"/>
        <end position="261"/>
    </location>
</feature>
<feature type="sequence conflict" description="In Ref. 1; AAB58422." evidence="9" ref="1">
    <original>H</original>
    <variation>R</variation>
    <location>
        <position position="14"/>
    </location>
</feature>
<feature type="sequence conflict" description="In Ref. 1; AAB58422." evidence="9" ref="1">
    <original>G</original>
    <variation>E</variation>
    <location>
        <position position="70"/>
    </location>
</feature>
<evidence type="ECO:0000250" key="1"/>
<evidence type="ECO:0000250" key="2">
    <source>
        <dbReference type="UniProtKB" id="Q9NP31"/>
    </source>
</evidence>
<evidence type="ECO:0000255" key="3"/>
<evidence type="ECO:0000255" key="4">
    <source>
        <dbReference type="PROSITE-ProRule" id="PRU00191"/>
    </source>
</evidence>
<evidence type="ECO:0000256" key="5">
    <source>
        <dbReference type="SAM" id="MobiDB-lite"/>
    </source>
</evidence>
<evidence type="ECO:0000269" key="6">
    <source>
    </source>
</evidence>
<evidence type="ECO:0000303" key="7">
    <source>
    </source>
</evidence>
<evidence type="ECO:0000303" key="8">
    <source>
    </source>
</evidence>
<evidence type="ECO:0000305" key="9"/>
<dbReference type="EMBL" id="U69490">
    <property type="protein sequence ID" value="AAB58422.1"/>
    <property type="molecule type" value="mRNA"/>
</dbReference>
<dbReference type="EMBL" id="AF203343">
    <property type="protein sequence ID" value="AAF19396.1"/>
    <property type="molecule type" value="mRNA"/>
</dbReference>
<dbReference type="CCDS" id="CCDS17455.1">
    <molecule id="Q9QXK9-2"/>
</dbReference>
<dbReference type="CCDS" id="CCDS38476.1">
    <molecule id="Q9QXK9-1"/>
</dbReference>
<dbReference type="RefSeq" id="NP_001020742.1">
    <molecule id="Q9QXK9-2"/>
    <property type="nucleotide sequence ID" value="NM_001025571.3"/>
</dbReference>
<dbReference type="RefSeq" id="NP_067284.1">
    <molecule id="Q9QXK9-1"/>
    <property type="nucleotide sequence ID" value="NM_021309.4"/>
</dbReference>
<dbReference type="SMR" id="Q9QXK9"/>
<dbReference type="FunCoup" id="Q9QXK9">
    <property type="interactions" value="488"/>
</dbReference>
<dbReference type="IntAct" id="Q9QXK9">
    <property type="interactions" value="1"/>
</dbReference>
<dbReference type="STRING" id="10090.ENSMUSP00000103207"/>
<dbReference type="iPTMnet" id="Q9QXK9"/>
<dbReference type="PhosphoSitePlus" id="Q9QXK9"/>
<dbReference type="jPOST" id="Q9QXK9"/>
<dbReference type="PaxDb" id="10090-ENSMUSP00000103207"/>
<dbReference type="ProteomicsDB" id="256995">
    <molecule id="Q9QXK9-1"/>
</dbReference>
<dbReference type="ProteomicsDB" id="256996">
    <molecule id="Q9QXK9-2"/>
</dbReference>
<dbReference type="Antibodypedia" id="20445">
    <property type="antibodies" value="336 antibodies from 30 providers"/>
</dbReference>
<dbReference type="DNASU" id="27371"/>
<dbReference type="Ensembl" id="ENSMUST00000029709.7">
    <molecule id="Q9QXK9-2"/>
    <property type="protein sequence ID" value="ENSMUSP00000029709.6"/>
    <property type="gene ID" value="ENSMUSG00000028071.13"/>
</dbReference>
<dbReference type="Ensembl" id="ENSMUST00000107581.9">
    <molecule id="Q9QXK9-1"/>
    <property type="protein sequence ID" value="ENSMUSP00000103207.3"/>
    <property type="gene ID" value="ENSMUSG00000028071.13"/>
</dbReference>
<dbReference type="GeneID" id="27371"/>
<dbReference type="KEGG" id="mmu:27371"/>
<dbReference type="UCSC" id="uc008pta.1">
    <molecule id="Q9QXK9-1"/>
    <property type="organism name" value="mouse"/>
</dbReference>
<dbReference type="AGR" id="MGI:1351596"/>
<dbReference type="CTD" id="9047"/>
<dbReference type="MGI" id="MGI:1351596">
    <property type="gene designation" value="Sh2d2a"/>
</dbReference>
<dbReference type="VEuPathDB" id="HostDB:ENSMUSG00000028071"/>
<dbReference type="eggNOG" id="ENOG502RE0K">
    <property type="taxonomic scope" value="Eukaryota"/>
</dbReference>
<dbReference type="GeneTree" id="ENSGT00940000161903"/>
<dbReference type="HOGENOM" id="CLU_709723_0_0_1"/>
<dbReference type="InParanoid" id="Q9QXK9"/>
<dbReference type="OMA" id="YSPVIKQ"/>
<dbReference type="OrthoDB" id="6108017at2759"/>
<dbReference type="PhylomeDB" id="Q9QXK9"/>
<dbReference type="TreeFam" id="TF336893"/>
<dbReference type="Reactome" id="R-MMU-4420097">
    <property type="pathway name" value="VEGFA-VEGFR2 Pathway"/>
</dbReference>
<dbReference type="BioGRID-ORCS" id="27371">
    <property type="hits" value="0 hits in 78 CRISPR screens"/>
</dbReference>
<dbReference type="PRO" id="PR:Q9QXK9"/>
<dbReference type="Proteomes" id="UP000000589">
    <property type="component" value="Chromosome 3"/>
</dbReference>
<dbReference type="RNAct" id="Q9QXK9">
    <property type="molecule type" value="protein"/>
</dbReference>
<dbReference type="Bgee" id="ENSMUSG00000028071">
    <property type="expression patterns" value="Expressed in thymus and 32 other cell types or tissues"/>
</dbReference>
<dbReference type="ExpressionAtlas" id="Q9QXK9">
    <property type="expression patterns" value="baseline and differential"/>
</dbReference>
<dbReference type="GO" id="GO:0005737">
    <property type="term" value="C:cytoplasm"/>
    <property type="evidence" value="ECO:0007669"/>
    <property type="project" value="UniProtKB-SubCell"/>
</dbReference>
<dbReference type="GO" id="GO:0005886">
    <property type="term" value="C:plasma membrane"/>
    <property type="evidence" value="ECO:0007669"/>
    <property type="project" value="UniProtKB-SubCell"/>
</dbReference>
<dbReference type="GO" id="GO:0017124">
    <property type="term" value="F:SH3 domain binding"/>
    <property type="evidence" value="ECO:0007669"/>
    <property type="project" value="UniProtKB-KW"/>
</dbReference>
<dbReference type="GO" id="GO:0042098">
    <property type="term" value="P:T cell proliferation"/>
    <property type="evidence" value="ECO:0000315"/>
    <property type="project" value="MGI"/>
</dbReference>
<dbReference type="CDD" id="cd10416">
    <property type="entry name" value="SH2_SH2D2A"/>
    <property type="match status" value="1"/>
</dbReference>
<dbReference type="FunFam" id="3.30.505.10:FF:000144">
    <property type="entry name" value="SH2 domain protein 2A"/>
    <property type="match status" value="1"/>
</dbReference>
<dbReference type="Gene3D" id="3.30.505.10">
    <property type="entry name" value="SH2 domain"/>
    <property type="match status" value="1"/>
</dbReference>
<dbReference type="InterPro" id="IPR000980">
    <property type="entry name" value="SH2"/>
</dbReference>
<dbReference type="InterPro" id="IPR036860">
    <property type="entry name" value="SH2_dom_sf"/>
</dbReference>
<dbReference type="InterPro" id="IPR035884">
    <property type="entry name" value="SH2D2A_SH2"/>
</dbReference>
<dbReference type="PANTHER" id="PTHR14388:SF9">
    <property type="entry name" value="SH2 DOMAIN-CONTAINING PROTEIN 2A"/>
    <property type="match status" value="1"/>
</dbReference>
<dbReference type="PANTHER" id="PTHR14388">
    <property type="entry name" value="T CELL-SPECIFIC ADAPTER PROTEIN TSAD"/>
    <property type="match status" value="1"/>
</dbReference>
<dbReference type="Pfam" id="PF00017">
    <property type="entry name" value="SH2"/>
    <property type="match status" value="1"/>
</dbReference>
<dbReference type="PRINTS" id="PR00401">
    <property type="entry name" value="SH2DOMAIN"/>
</dbReference>
<dbReference type="SMART" id="SM00252">
    <property type="entry name" value="SH2"/>
    <property type="match status" value="1"/>
</dbReference>
<dbReference type="SUPFAM" id="SSF55550">
    <property type="entry name" value="SH2 domain"/>
    <property type="match status" value="1"/>
</dbReference>
<dbReference type="PROSITE" id="PS50001">
    <property type="entry name" value="SH2"/>
    <property type="match status" value="1"/>
</dbReference>
<proteinExistence type="evidence at protein level"/>
<comment type="function">
    <text evidence="6">Could be a T-cell-specific adapter protein involved in the control of T-cell activation. May play a role in p56-LCK-mediated T-cell signaling. Could be involved in the regulation of responses to T-cell activation stimuli, specifically proliferation and lymphokine production. Interactions with ITK and TXK may provide important biochemical links of these two important kinases with other components in the T-cell activation machinery.</text>
</comment>
<comment type="subunit">
    <text evidence="1 6">Interacts with KDR (By similarity). Interacts with p56-LCK, TXK and ITK.</text>
</comment>
<comment type="interaction">
    <interactant intactId="EBI-1644">
        <id>Q9QXK9</id>
    </interactant>
    <interactant intactId="EBI-1401">
        <id>P06240</id>
        <label>Lck</label>
    </interactant>
    <organismsDiffer>false</organismsDiffer>
    <experiments>3</experiments>
</comment>
<comment type="subcellular location">
    <subcellularLocation>
        <location>Cytoplasm</location>
    </subcellularLocation>
    <subcellularLocation>
        <location>Cell membrane</location>
    </subcellularLocation>
    <text>Redistributed from cytoplasm to the plasma membrane in a T-cell activation-dependent manner.</text>
</comment>
<comment type="alternative products">
    <event type="alternative splicing"/>
    <isoform>
        <id>Q9QXK9-1</id>
        <name>1</name>
        <sequence type="displayed"/>
    </isoform>
    <isoform>
        <id>Q9QXK9-2</id>
        <name>2</name>
        <sequence type="described" ref="VSP_003967"/>
    </isoform>
</comment>
<comment type="tissue specificity">
    <text>Expression limited to tissues of the immune system and, in particular, activated T-cells and natural killer cells. Expressed in the thymus, lymph node, and to a lesser extent, in the spleen and bone marrow. According to PubMed:10553045, also expressed in the lung.</text>
</comment>
<comment type="induction">
    <text>Up-regulated substantially after T-cell activation.</text>
</comment>
<comment type="PTM">
    <text>Phosphorylated on tyrosine residues upon TCR-stimulation.</text>
</comment>
<comment type="miscellaneous">
    <text>Proliferation of SH2D2A-deficient T-cells in response to T-cell receptor (TCR)-mediated activation is significantly impaired. These activated T-cells are defective in the production of interleukin (IL)-2 and interferon gamma, but not IL-4.</text>
</comment>
<organism>
    <name type="scientific">Mus musculus</name>
    <name type="common">Mouse</name>
    <dbReference type="NCBI Taxonomy" id="10090"/>
    <lineage>
        <taxon>Eukaryota</taxon>
        <taxon>Metazoa</taxon>
        <taxon>Chordata</taxon>
        <taxon>Craniata</taxon>
        <taxon>Vertebrata</taxon>
        <taxon>Euteleostomi</taxon>
        <taxon>Mammalia</taxon>
        <taxon>Eutheria</taxon>
        <taxon>Euarchontoglires</taxon>
        <taxon>Glires</taxon>
        <taxon>Rodentia</taxon>
        <taxon>Myomorpha</taxon>
        <taxon>Muroidea</taxon>
        <taxon>Muridae</taxon>
        <taxon>Murinae</taxon>
        <taxon>Mus</taxon>
        <taxon>Mus</taxon>
    </lineage>
</organism>
<reference key="1">
    <citation type="journal article" date="1999" name="J. Immunol.">
        <title>Lad, an adapter protein interacting with the SH2 domain of p56lck, is required for T cell activation.</title>
        <authorList>
            <person name="Choi Y.B."/>
            <person name="Kim C.K."/>
            <person name="Yun Y."/>
        </authorList>
    </citation>
    <scope>NUCLEOTIDE SEQUENCE [MRNA] (ISOFORM 2)</scope>
    <source>
        <strain>C57BL/Kaplan</strain>
        <tissue>Lung</tissue>
        <tissue>Spleen</tissue>
    </source>
</reference>
<reference key="2">
    <citation type="journal article" date="1999" name="J. Exp. Med.">
        <title>RIBP, a novel Rlk/Txk- and Itk-binding adaptor protein that regulates T cell activation.</title>
        <authorList>
            <person name="Rajagopal K."/>
            <person name="Sommers C.L."/>
            <person name="Decker D.C."/>
            <person name="Mitchell E.O."/>
            <person name="Korthauer U."/>
            <person name="Sperling A.I."/>
            <person name="Kozak C.A."/>
            <person name="Love P.E."/>
            <person name="Bluestone J.A."/>
        </authorList>
    </citation>
    <scope>NUCLEOTIDE SEQUENCE [MRNA] (ISOFORMS 1 AND 2)</scope>
    <scope>FUNCTION</scope>
    <scope>INTERACTION WITH TXK AND ITK</scope>
    <source>
        <strain>C57BL/Kaplan</strain>
        <tissue>Fetal thymus</tissue>
        <tissue>T-cell lymphoma</tissue>
    </source>
</reference>
<protein>
    <recommendedName>
        <fullName>SH2 domain-containing protein 2A</fullName>
    </recommendedName>
    <alternativeName>
        <fullName>Lck-associated adapter protein</fullName>
        <shortName>Lad</shortName>
    </alternativeName>
    <alternativeName>
        <fullName>Rlk/Itk-binding protein</fullName>
        <shortName>Ribp</shortName>
    </alternativeName>
</protein>
<gene>
    <name type="primary">Sh2d2a</name>
    <name type="synonym">Lad</name>
    <name type="synonym">Ribp</name>
</gene>